<evidence type="ECO:0000255" key="1">
    <source>
        <dbReference type="HAMAP-Rule" id="MF_01694"/>
    </source>
</evidence>
<evidence type="ECO:0000255" key="2">
    <source>
        <dbReference type="PROSITE-ProRule" id="PRU01266"/>
    </source>
</evidence>
<gene>
    <name evidence="1" type="primary">bioB</name>
    <name type="ordered locus">BCAH187_A4248</name>
</gene>
<keyword id="KW-0001">2Fe-2S</keyword>
<keyword id="KW-0004">4Fe-4S</keyword>
<keyword id="KW-0093">Biotin biosynthesis</keyword>
<keyword id="KW-0408">Iron</keyword>
<keyword id="KW-0411">Iron-sulfur</keyword>
<keyword id="KW-0479">Metal-binding</keyword>
<keyword id="KW-0949">S-adenosyl-L-methionine</keyword>
<keyword id="KW-0808">Transferase</keyword>
<accession>B7HNN1</accession>
<organism>
    <name type="scientific">Bacillus cereus (strain AH187)</name>
    <dbReference type="NCBI Taxonomy" id="405534"/>
    <lineage>
        <taxon>Bacteria</taxon>
        <taxon>Bacillati</taxon>
        <taxon>Bacillota</taxon>
        <taxon>Bacilli</taxon>
        <taxon>Bacillales</taxon>
        <taxon>Bacillaceae</taxon>
        <taxon>Bacillus</taxon>
        <taxon>Bacillus cereus group</taxon>
    </lineage>
</organism>
<sequence length="332" mass="36952">MKQVQTKRDWKKLAYDVVEEKVITKEDAIAILEADDTEILEIMNAAYIIRHHHFGKKVKLNMIINTKSGLCPEDCGYCSQSIISEAPIDKYAWLTQEKIVEGAHEAIRRKAGTYCIVASGRRPTDKEVNHVIGAVKEIRETTDLKICCCLGFLNEDQAGRLAEAGVHRYNHNLNTHANNYESICSTHTYDDRVDTVQKAKQAGISPCSGAIFGMGETIEERAEIAFELQRIDADSIPCNFLVAVKGTPLEGQKELTPVECLKVLAMMRFVNPTKEIRISGGREINLRSVQPIGLFAANSIFVGDYLTTAGQEPTADWGMIEDLGFEIEECAL</sequence>
<comment type="function">
    <text evidence="1">Catalyzes the conversion of dethiobiotin (DTB) to biotin by the insertion of a sulfur atom into dethiobiotin via a radical-based mechanism.</text>
</comment>
<comment type="catalytic activity">
    <reaction evidence="1">
        <text>(4R,5S)-dethiobiotin + (sulfur carrier)-SH + 2 reduced [2Fe-2S]-[ferredoxin] + 2 S-adenosyl-L-methionine = (sulfur carrier)-H + biotin + 2 5'-deoxyadenosine + 2 L-methionine + 2 oxidized [2Fe-2S]-[ferredoxin]</text>
        <dbReference type="Rhea" id="RHEA:22060"/>
        <dbReference type="Rhea" id="RHEA-COMP:10000"/>
        <dbReference type="Rhea" id="RHEA-COMP:10001"/>
        <dbReference type="Rhea" id="RHEA-COMP:14737"/>
        <dbReference type="Rhea" id="RHEA-COMP:14739"/>
        <dbReference type="ChEBI" id="CHEBI:17319"/>
        <dbReference type="ChEBI" id="CHEBI:29917"/>
        <dbReference type="ChEBI" id="CHEBI:33737"/>
        <dbReference type="ChEBI" id="CHEBI:33738"/>
        <dbReference type="ChEBI" id="CHEBI:57586"/>
        <dbReference type="ChEBI" id="CHEBI:57844"/>
        <dbReference type="ChEBI" id="CHEBI:59789"/>
        <dbReference type="ChEBI" id="CHEBI:64428"/>
        <dbReference type="ChEBI" id="CHEBI:149473"/>
        <dbReference type="EC" id="2.8.1.6"/>
    </reaction>
</comment>
<comment type="cofactor">
    <cofactor evidence="1">
        <name>[4Fe-4S] cluster</name>
        <dbReference type="ChEBI" id="CHEBI:49883"/>
    </cofactor>
    <text evidence="1">Binds 1 [4Fe-4S] cluster. The cluster is coordinated with 3 cysteines and an exchangeable S-adenosyl-L-methionine.</text>
</comment>
<comment type="cofactor">
    <cofactor evidence="1">
        <name>[2Fe-2S] cluster</name>
        <dbReference type="ChEBI" id="CHEBI:190135"/>
    </cofactor>
    <text evidence="1">Binds 1 [2Fe-2S] cluster. The cluster is coordinated with 3 cysteines and 1 arginine.</text>
</comment>
<comment type="pathway">
    <text evidence="1">Cofactor biosynthesis; biotin biosynthesis; biotin from 7,8-diaminononanoate: step 2/2.</text>
</comment>
<comment type="subunit">
    <text evidence="1">Homodimer.</text>
</comment>
<comment type="similarity">
    <text evidence="1">Belongs to the radical SAM superfamily. Biotin synthase family.</text>
</comment>
<proteinExistence type="inferred from homology"/>
<dbReference type="EC" id="2.8.1.6" evidence="1"/>
<dbReference type="EMBL" id="CP001177">
    <property type="protein sequence ID" value="ACJ81972.1"/>
    <property type="molecule type" value="Genomic_DNA"/>
</dbReference>
<dbReference type="SMR" id="B7HNN1"/>
<dbReference type="KEGG" id="bcr:BCAH187_A4248"/>
<dbReference type="HOGENOM" id="CLU_033172_2_1_9"/>
<dbReference type="UniPathway" id="UPA00078">
    <property type="reaction ID" value="UER00162"/>
</dbReference>
<dbReference type="Proteomes" id="UP000002214">
    <property type="component" value="Chromosome"/>
</dbReference>
<dbReference type="GO" id="GO:0051537">
    <property type="term" value="F:2 iron, 2 sulfur cluster binding"/>
    <property type="evidence" value="ECO:0007669"/>
    <property type="project" value="UniProtKB-KW"/>
</dbReference>
<dbReference type="GO" id="GO:0051539">
    <property type="term" value="F:4 iron, 4 sulfur cluster binding"/>
    <property type="evidence" value="ECO:0007669"/>
    <property type="project" value="UniProtKB-KW"/>
</dbReference>
<dbReference type="GO" id="GO:0004076">
    <property type="term" value="F:biotin synthase activity"/>
    <property type="evidence" value="ECO:0007669"/>
    <property type="project" value="UniProtKB-UniRule"/>
</dbReference>
<dbReference type="GO" id="GO:0005506">
    <property type="term" value="F:iron ion binding"/>
    <property type="evidence" value="ECO:0007669"/>
    <property type="project" value="UniProtKB-UniRule"/>
</dbReference>
<dbReference type="GO" id="GO:0009102">
    <property type="term" value="P:biotin biosynthetic process"/>
    <property type="evidence" value="ECO:0007669"/>
    <property type="project" value="UniProtKB-UniRule"/>
</dbReference>
<dbReference type="CDD" id="cd01335">
    <property type="entry name" value="Radical_SAM"/>
    <property type="match status" value="1"/>
</dbReference>
<dbReference type="FunFam" id="3.20.20.70:FF:000026">
    <property type="entry name" value="Biotin synthase"/>
    <property type="match status" value="1"/>
</dbReference>
<dbReference type="Gene3D" id="3.20.20.70">
    <property type="entry name" value="Aldolase class I"/>
    <property type="match status" value="1"/>
</dbReference>
<dbReference type="HAMAP" id="MF_01694">
    <property type="entry name" value="BioB"/>
    <property type="match status" value="1"/>
</dbReference>
<dbReference type="InterPro" id="IPR013785">
    <property type="entry name" value="Aldolase_TIM"/>
</dbReference>
<dbReference type="InterPro" id="IPR010722">
    <property type="entry name" value="BATS_dom"/>
</dbReference>
<dbReference type="InterPro" id="IPR002684">
    <property type="entry name" value="Biotin_synth/BioAB"/>
</dbReference>
<dbReference type="InterPro" id="IPR024177">
    <property type="entry name" value="Biotin_synthase"/>
</dbReference>
<dbReference type="InterPro" id="IPR006638">
    <property type="entry name" value="Elp3/MiaA/NifB-like_rSAM"/>
</dbReference>
<dbReference type="InterPro" id="IPR007197">
    <property type="entry name" value="rSAM"/>
</dbReference>
<dbReference type="NCBIfam" id="TIGR00433">
    <property type="entry name" value="bioB"/>
    <property type="match status" value="1"/>
</dbReference>
<dbReference type="PANTHER" id="PTHR22976">
    <property type="entry name" value="BIOTIN SYNTHASE"/>
    <property type="match status" value="1"/>
</dbReference>
<dbReference type="PANTHER" id="PTHR22976:SF2">
    <property type="entry name" value="BIOTIN SYNTHASE, MITOCHONDRIAL"/>
    <property type="match status" value="1"/>
</dbReference>
<dbReference type="Pfam" id="PF06968">
    <property type="entry name" value="BATS"/>
    <property type="match status" value="1"/>
</dbReference>
<dbReference type="Pfam" id="PF04055">
    <property type="entry name" value="Radical_SAM"/>
    <property type="match status" value="1"/>
</dbReference>
<dbReference type="PIRSF" id="PIRSF001619">
    <property type="entry name" value="Biotin_synth"/>
    <property type="match status" value="1"/>
</dbReference>
<dbReference type="SFLD" id="SFLDG01278">
    <property type="entry name" value="biotin_synthase_like"/>
    <property type="match status" value="1"/>
</dbReference>
<dbReference type="SFLD" id="SFLDS00029">
    <property type="entry name" value="Radical_SAM"/>
    <property type="match status" value="1"/>
</dbReference>
<dbReference type="SMART" id="SM00876">
    <property type="entry name" value="BATS"/>
    <property type="match status" value="1"/>
</dbReference>
<dbReference type="SMART" id="SM00729">
    <property type="entry name" value="Elp3"/>
    <property type="match status" value="1"/>
</dbReference>
<dbReference type="SUPFAM" id="SSF102114">
    <property type="entry name" value="Radical SAM enzymes"/>
    <property type="match status" value="1"/>
</dbReference>
<dbReference type="PROSITE" id="PS51918">
    <property type="entry name" value="RADICAL_SAM"/>
    <property type="match status" value="1"/>
</dbReference>
<name>BIOB_BACC7</name>
<reference key="1">
    <citation type="submission" date="2008-10" db="EMBL/GenBank/DDBJ databases">
        <title>Genome sequence of Bacillus cereus AH187.</title>
        <authorList>
            <person name="Dodson R.J."/>
            <person name="Durkin A.S."/>
            <person name="Rosovitz M.J."/>
            <person name="Rasko D.A."/>
            <person name="Kolsto A.B."/>
            <person name="Okstad O.A."/>
            <person name="Ravel J."/>
            <person name="Sutton G."/>
        </authorList>
    </citation>
    <scope>NUCLEOTIDE SEQUENCE [LARGE SCALE GENOMIC DNA]</scope>
    <source>
        <strain>AH187</strain>
    </source>
</reference>
<feature type="chain" id="PRO_0000381222" description="Biotin synthase">
    <location>
        <begin position="1"/>
        <end position="332"/>
    </location>
</feature>
<feature type="domain" description="Radical SAM core" evidence="2">
    <location>
        <begin position="53"/>
        <end position="282"/>
    </location>
</feature>
<feature type="binding site" evidence="1">
    <location>
        <position position="71"/>
    </location>
    <ligand>
        <name>[4Fe-4S] cluster</name>
        <dbReference type="ChEBI" id="CHEBI:49883"/>
        <note>4Fe-4S-S-AdoMet</note>
    </ligand>
</feature>
<feature type="binding site" evidence="1">
    <location>
        <position position="75"/>
    </location>
    <ligand>
        <name>[4Fe-4S] cluster</name>
        <dbReference type="ChEBI" id="CHEBI:49883"/>
        <note>4Fe-4S-S-AdoMet</note>
    </ligand>
</feature>
<feature type="binding site" evidence="1">
    <location>
        <position position="78"/>
    </location>
    <ligand>
        <name>[4Fe-4S] cluster</name>
        <dbReference type="ChEBI" id="CHEBI:49883"/>
        <note>4Fe-4S-S-AdoMet</note>
    </ligand>
</feature>
<feature type="binding site" evidence="1">
    <location>
        <position position="115"/>
    </location>
    <ligand>
        <name>[2Fe-2S] cluster</name>
        <dbReference type="ChEBI" id="CHEBI:190135"/>
    </ligand>
</feature>
<feature type="binding site" evidence="1">
    <location>
        <position position="147"/>
    </location>
    <ligand>
        <name>[2Fe-2S] cluster</name>
        <dbReference type="ChEBI" id="CHEBI:190135"/>
    </ligand>
</feature>
<feature type="binding site" evidence="1">
    <location>
        <position position="207"/>
    </location>
    <ligand>
        <name>[2Fe-2S] cluster</name>
        <dbReference type="ChEBI" id="CHEBI:190135"/>
    </ligand>
</feature>
<feature type="binding site" evidence="1">
    <location>
        <position position="277"/>
    </location>
    <ligand>
        <name>[2Fe-2S] cluster</name>
        <dbReference type="ChEBI" id="CHEBI:190135"/>
    </ligand>
</feature>
<protein>
    <recommendedName>
        <fullName evidence="1">Biotin synthase</fullName>
        <ecNumber evidence="1">2.8.1.6</ecNumber>
    </recommendedName>
</protein>